<protein>
    <recommendedName>
        <fullName evidence="1">Glutamate-1-semialdehyde 2,1-aminomutase</fullName>
        <shortName evidence="1">GSA</shortName>
        <ecNumber evidence="1">5.4.3.8</ecNumber>
    </recommendedName>
    <alternativeName>
        <fullName evidence="1">Glutamate-1-semialdehyde aminotransferase</fullName>
        <shortName evidence="1">GSA-AT</shortName>
    </alternativeName>
</protein>
<sequence>MTRSDELFEQAKKTIPGGVNSPVRAFSGVGGSPRFIEKADGAYIFDADGKKYIDYVGSWGPMILGHNHPKIREAVLKAVENGLSFGAPTELEITMAEKVIEMVPSIEQVRMVSSGTEATMSAIRLARGFTNRDKILKFEGCYHGHADCLLVKAGSGALTLGQPSSPGIPEDFAKHTLTATYNDLDSVKAIFEQYPEEISCIIIEPVAGNMNCIPPIDGFLQGLRAICDQYGALMIIDEVMTGFRVSKSGAQGHYGVTPDLTTLGKVIGGGMPVGAFGGRKDVMQFIAPTGPVYQAGTLSGNPIAMSAGLAQMEALCEEGVYEQLAAKTQYIAEGFKAAANKHGIPMAINYVGGMFGFFFTSEETVTNFAQVTKCDTALFAEFYHMMLDEGVYLAPSAYEAGFLSLAHGEEELEATLAAADRVFAKLAKA</sequence>
<accession>A8H164</accession>
<dbReference type="EC" id="5.4.3.8" evidence="1"/>
<dbReference type="EMBL" id="CP000851">
    <property type="protein sequence ID" value="ABV86301.1"/>
    <property type="molecule type" value="Genomic_DNA"/>
</dbReference>
<dbReference type="RefSeq" id="WP_012154234.1">
    <property type="nucleotide sequence ID" value="NC_009901.1"/>
</dbReference>
<dbReference type="SMR" id="A8H164"/>
<dbReference type="STRING" id="398579.Spea_0974"/>
<dbReference type="KEGG" id="spl:Spea_0974"/>
<dbReference type="eggNOG" id="COG0001">
    <property type="taxonomic scope" value="Bacteria"/>
</dbReference>
<dbReference type="HOGENOM" id="CLU_016922_1_5_6"/>
<dbReference type="OrthoDB" id="9801052at2"/>
<dbReference type="UniPathway" id="UPA00251">
    <property type="reaction ID" value="UER00317"/>
</dbReference>
<dbReference type="Proteomes" id="UP000002608">
    <property type="component" value="Chromosome"/>
</dbReference>
<dbReference type="GO" id="GO:0005737">
    <property type="term" value="C:cytoplasm"/>
    <property type="evidence" value="ECO:0007669"/>
    <property type="project" value="UniProtKB-SubCell"/>
</dbReference>
<dbReference type="GO" id="GO:0042286">
    <property type="term" value="F:glutamate-1-semialdehyde 2,1-aminomutase activity"/>
    <property type="evidence" value="ECO:0007669"/>
    <property type="project" value="UniProtKB-UniRule"/>
</dbReference>
<dbReference type="GO" id="GO:0030170">
    <property type="term" value="F:pyridoxal phosphate binding"/>
    <property type="evidence" value="ECO:0007669"/>
    <property type="project" value="InterPro"/>
</dbReference>
<dbReference type="GO" id="GO:0008483">
    <property type="term" value="F:transaminase activity"/>
    <property type="evidence" value="ECO:0007669"/>
    <property type="project" value="InterPro"/>
</dbReference>
<dbReference type="GO" id="GO:0006782">
    <property type="term" value="P:protoporphyrinogen IX biosynthetic process"/>
    <property type="evidence" value="ECO:0007669"/>
    <property type="project" value="UniProtKB-UniRule"/>
</dbReference>
<dbReference type="CDD" id="cd00610">
    <property type="entry name" value="OAT_like"/>
    <property type="match status" value="1"/>
</dbReference>
<dbReference type="FunFam" id="3.40.640.10:FF:000021">
    <property type="entry name" value="Glutamate-1-semialdehyde 2,1-aminomutase"/>
    <property type="match status" value="1"/>
</dbReference>
<dbReference type="FunFam" id="3.90.1150.10:FF:000012">
    <property type="entry name" value="Glutamate-1-semialdehyde 2,1-aminomutase"/>
    <property type="match status" value="1"/>
</dbReference>
<dbReference type="Gene3D" id="3.90.1150.10">
    <property type="entry name" value="Aspartate Aminotransferase, domain 1"/>
    <property type="match status" value="1"/>
</dbReference>
<dbReference type="Gene3D" id="3.40.640.10">
    <property type="entry name" value="Type I PLP-dependent aspartate aminotransferase-like (Major domain)"/>
    <property type="match status" value="1"/>
</dbReference>
<dbReference type="HAMAP" id="MF_00375">
    <property type="entry name" value="HemL_aminotrans_3"/>
    <property type="match status" value="1"/>
</dbReference>
<dbReference type="InterPro" id="IPR004639">
    <property type="entry name" value="4pyrrol_synth_GluAld_NH2Trfase"/>
</dbReference>
<dbReference type="InterPro" id="IPR005814">
    <property type="entry name" value="Aminotrans_3"/>
</dbReference>
<dbReference type="InterPro" id="IPR049704">
    <property type="entry name" value="Aminotrans_3_PPA_site"/>
</dbReference>
<dbReference type="InterPro" id="IPR015424">
    <property type="entry name" value="PyrdxlP-dep_Trfase"/>
</dbReference>
<dbReference type="InterPro" id="IPR015421">
    <property type="entry name" value="PyrdxlP-dep_Trfase_major"/>
</dbReference>
<dbReference type="InterPro" id="IPR015422">
    <property type="entry name" value="PyrdxlP-dep_Trfase_small"/>
</dbReference>
<dbReference type="NCBIfam" id="TIGR00713">
    <property type="entry name" value="hemL"/>
    <property type="match status" value="1"/>
</dbReference>
<dbReference type="NCBIfam" id="NF000818">
    <property type="entry name" value="PRK00062.1"/>
    <property type="match status" value="1"/>
</dbReference>
<dbReference type="PANTHER" id="PTHR43713">
    <property type="entry name" value="GLUTAMATE-1-SEMIALDEHYDE 2,1-AMINOMUTASE"/>
    <property type="match status" value="1"/>
</dbReference>
<dbReference type="PANTHER" id="PTHR43713:SF3">
    <property type="entry name" value="GLUTAMATE-1-SEMIALDEHYDE 2,1-AMINOMUTASE 1, CHLOROPLASTIC-RELATED"/>
    <property type="match status" value="1"/>
</dbReference>
<dbReference type="Pfam" id="PF00202">
    <property type="entry name" value="Aminotran_3"/>
    <property type="match status" value="1"/>
</dbReference>
<dbReference type="SUPFAM" id="SSF53383">
    <property type="entry name" value="PLP-dependent transferases"/>
    <property type="match status" value="1"/>
</dbReference>
<dbReference type="PROSITE" id="PS00600">
    <property type="entry name" value="AA_TRANSFER_CLASS_3"/>
    <property type="match status" value="1"/>
</dbReference>
<comment type="catalytic activity">
    <reaction evidence="1">
        <text>(S)-4-amino-5-oxopentanoate = 5-aminolevulinate</text>
        <dbReference type="Rhea" id="RHEA:14265"/>
        <dbReference type="ChEBI" id="CHEBI:57501"/>
        <dbReference type="ChEBI" id="CHEBI:356416"/>
        <dbReference type="EC" id="5.4.3.8"/>
    </reaction>
</comment>
<comment type="cofactor">
    <cofactor evidence="1">
        <name>pyridoxal 5'-phosphate</name>
        <dbReference type="ChEBI" id="CHEBI:597326"/>
    </cofactor>
</comment>
<comment type="pathway">
    <text evidence="1">Porphyrin-containing compound metabolism; protoporphyrin-IX biosynthesis; 5-aminolevulinate from L-glutamyl-tRNA(Glu): step 2/2.</text>
</comment>
<comment type="subunit">
    <text evidence="1">Homodimer.</text>
</comment>
<comment type="subcellular location">
    <subcellularLocation>
        <location evidence="1">Cytoplasm</location>
    </subcellularLocation>
</comment>
<comment type="similarity">
    <text evidence="1">Belongs to the class-III pyridoxal-phosphate-dependent aminotransferase family. HemL subfamily.</text>
</comment>
<proteinExistence type="inferred from homology"/>
<feature type="chain" id="PRO_1000079934" description="Glutamate-1-semialdehyde 2,1-aminomutase">
    <location>
        <begin position="1"/>
        <end position="429"/>
    </location>
</feature>
<feature type="modified residue" description="N6-(pyridoxal phosphate)lysine" evidence="1">
    <location>
        <position position="265"/>
    </location>
</feature>
<name>GSA_SHEPA</name>
<keyword id="KW-0963">Cytoplasm</keyword>
<keyword id="KW-0413">Isomerase</keyword>
<keyword id="KW-0627">Porphyrin biosynthesis</keyword>
<keyword id="KW-0663">Pyridoxal phosphate</keyword>
<keyword id="KW-1185">Reference proteome</keyword>
<organism>
    <name type="scientific">Shewanella pealeana (strain ATCC 700345 / ANG-SQ1)</name>
    <dbReference type="NCBI Taxonomy" id="398579"/>
    <lineage>
        <taxon>Bacteria</taxon>
        <taxon>Pseudomonadati</taxon>
        <taxon>Pseudomonadota</taxon>
        <taxon>Gammaproteobacteria</taxon>
        <taxon>Alteromonadales</taxon>
        <taxon>Shewanellaceae</taxon>
        <taxon>Shewanella</taxon>
    </lineage>
</organism>
<reference key="1">
    <citation type="submission" date="2007-10" db="EMBL/GenBank/DDBJ databases">
        <title>Complete sequence of Shewanella pealeana ATCC 700345.</title>
        <authorList>
            <consortium name="US DOE Joint Genome Institute"/>
            <person name="Copeland A."/>
            <person name="Lucas S."/>
            <person name="Lapidus A."/>
            <person name="Barry K."/>
            <person name="Glavina del Rio T."/>
            <person name="Dalin E."/>
            <person name="Tice H."/>
            <person name="Pitluck S."/>
            <person name="Chertkov O."/>
            <person name="Brettin T."/>
            <person name="Bruce D."/>
            <person name="Detter J.C."/>
            <person name="Han C."/>
            <person name="Schmutz J."/>
            <person name="Larimer F."/>
            <person name="Land M."/>
            <person name="Hauser L."/>
            <person name="Kyrpides N."/>
            <person name="Kim E."/>
            <person name="Zhao J.-S.Z."/>
            <person name="Manno D."/>
            <person name="Hawari J."/>
            <person name="Richardson P."/>
        </authorList>
    </citation>
    <scope>NUCLEOTIDE SEQUENCE [LARGE SCALE GENOMIC DNA]</scope>
    <source>
        <strain>ATCC 700345 / ANG-SQ1</strain>
    </source>
</reference>
<gene>
    <name evidence="1" type="primary">hemL</name>
    <name type="ordered locus">Spea_0974</name>
</gene>
<evidence type="ECO:0000255" key="1">
    <source>
        <dbReference type="HAMAP-Rule" id="MF_00375"/>
    </source>
</evidence>